<sequence>MHIAVVGLSHRTAPVEIREKLSIPEQTMETSLQTLRGNDQILEVSILSTCNRLEIYTLVRHPERGISAISDFLGQHSGLATEDLSPHLFNFHHDEAVAHLMRVAAGLDSLVLGEGQILSQVKKMVRLGQEHKSMGPILNRLLTQAVSTGKRVRSETNLGTGAVSISSAAVELAQLKLGQAQGEDQLMTLESELVAVVGAGRMSRLLLQHLQAKGCSGVMLLNRTRQRAEDLSADFPELPVECRPLDDLNHCLSTCSLVFTSTAADDPIVDASLLKQLKRRSFLRLIDIGVPRNIASDVVDVPGVESHDVDDLHEVVSRNQEARQQMAKEAEVVLQEETRLFLEWWDSLEAVPTINRLRATLEAIRAEELQKALSRMGPDFSARERKVVEALSKGIINKILHTPVTQLRAPQARPERQQALRVVASLFELDPPLENG</sequence>
<dbReference type="EC" id="1.2.1.70" evidence="1"/>
<dbReference type="EMBL" id="BX548175">
    <property type="protein sequence ID" value="CAE20742.1"/>
    <property type="molecule type" value="Genomic_DNA"/>
</dbReference>
<dbReference type="RefSeq" id="WP_011129946.1">
    <property type="nucleotide sequence ID" value="NC_005071.1"/>
</dbReference>
<dbReference type="SMR" id="Q7V809"/>
<dbReference type="KEGG" id="pmt:PMT_0567"/>
<dbReference type="eggNOG" id="COG0373">
    <property type="taxonomic scope" value="Bacteria"/>
</dbReference>
<dbReference type="HOGENOM" id="CLU_035113_2_1_3"/>
<dbReference type="OrthoDB" id="110209at2"/>
<dbReference type="UniPathway" id="UPA00251">
    <property type="reaction ID" value="UER00316"/>
</dbReference>
<dbReference type="UniPathway" id="UPA00668"/>
<dbReference type="Proteomes" id="UP000001423">
    <property type="component" value="Chromosome"/>
</dbReference>
<dbReference type="GO" id="GO:0008883">
    <property type="term" value="F:glutamyl-tRNA reductase activity"/>
    <property type="evidence" value="ECO:0007669"/>
    <property type="project" value="UniProtKB-UniRule"/>
</dbReference>
<dbReference type="GO" id="GO:0050661">
    <property type="term" value="F:NADP binding"/>
    <property type="evidence" value="ECO:0007669"/>
    <property type="project" value="InterPro"/>
</dbReference>
<dbReference type="GO" id="GO:0015995">
    <property type="term" value="P:chlorophyll biosynthetic process"/>
    <property type="evidence" value="ECO:0007669"/>
    <property type="project" value="UniProtKB-UniRule"/>
</dbReference>
<dbReference type="GO" id="GO:0006782">
    <property type="term" value="P:protoporphyrinogen IX biosynthetic process"/>
    <property type="evidence" value="ECO:0007669"/>
    <property type="project" value="UniProtKB-UniRule"/>
</dbReference>
<dbReference type="CDD" id="cd05213">
    <property type="entry name" value="NAD_bind_Glutamyl_tRNA_reduct"/>
    <property type="match status" value="1"/>
</dbReference>
<dbReference type="FunFam" id="3.30.460.30:FF:000001">
    <property type="entry name" value="Glutamyl-tRNA reductase"/>
    <property type="match status" value="1"/>
</dbReference>
<dbReference type="FunFam" id="3.40.50.720:FF:000031">
    <property type="entry name" value="Glutamyl-tRNA reductase"/>
    <property type="match status" value="1"/>
</dbReference>
<dbReference type="Gene3D" id="3.30.460.30">
    <property type="entry name" value="Glutamyl-tRNA reductase, N-terminal domain"/>
    <property type="match status" value="1"/>
</dbReference>
<dbReference type="Gene3D" id="3.40.50.720">
    <property type="entry name" value="NAD(P)-binding Rossmann-like Domain"/>
    <property type="match status" value="1"/>
</dbReference>
<dbReference type="HAMAP" id="MF_00087">
    <property type="entry name" value="Glu_tRNA_reductase"/>
    <property type="match status" value="1"/>
</dbReference>
<dbReference type="InterPro" id="IPR000343">
    <property type="entry name" value="4pyrrol_synth_GluRdtase"/>
</dbReference>
<dbReference type="InterPro" id="IPR015896">
    <property type="entry name" value="4pyrrol_synth_GluRdtase_dimer"/>
</dbReference>
<dbReference type="InterPro" id="IPR015895">
    <property type="entry name" value="4pyrrol_synth_GluRdtase_N"/>
</dbReference>
<dbReference type="InterPro" id="IPR018214">
    <property type="entry name" value="GluRdtase_CS"/>
</dbReference>
<dbReference type="InterPro" id="IPR036453">
    <property type="entry name" value="GluRdtase_dimer_dom_sf"/>
</dbReference>
<dbReference type="InterPro" id="IPR036343">
    <property type="entry name" value="GluRdtase_N_sf"/>
</dbReference>
<dbReference type="InterPro" id="IPR036291">
    <property type="entry name" value="NAD(P)-bd_dom_sf"/>
</dbReference>
<dbReference type="InterPro" id="IPR006151">
    <property type="entry name" value="Shikm_DH/Glu-tRNA_Rdtase"/>
</dbReference>
<dbReference type="NCBIfam" id="TIGR01035">
    <property type="entry name" value="hemA"/>
    <property type="match status" value="1"/>
</dbReference>
<dbReference type="NCBIfam" id="NF000744">
    <property type="entry name" value="PRK00045.1-3"/>
    <property type="match status" value="1"/>
</dbReference>
<dbReference type="PANTHER" id="PTHR43120">
    <property type="entry name" value="GLUTAMYL-TRNA REDUCTASE 1, CHLOROPLASTIC"/>
    <property type="match status" value="1"/>
</dbReference>
<dbReference type="PANTHER" id="PTHR43120:SF1">
    <property type="entry name" value="GLUTAMYL-TRNA REDUCTASE 1, CHLOROPLASTIC"/>
    <property type="match status" value="1"/>
</dbReference>
<dbReference type="Pfam" id="PF00745">
    <property type="entry name" value="GlutR_dimer"/>
    <property type="match status" value="1"/>
</dbReference>
<dbReference type="Pfam" id="PF05201">
    <property type="entry name" value="GlutR_N"/>
    <property type="match status" value="1"/>
</dbReference>
<dbReference type="Pfam" id="PF01488">
    <property type="entry name" value="Shikimate_DH"/>
    <property type="match status" value="1"/>
</dbReference>
<dbReference type="PIRSF" id="PIRSF000445">
    <property type="entry name" value="4pyrrol_synth_GluRdtase"/>
    <property type="match status" value="1"/>
</dbReference>
<dbReference type="SUPFAM" id="SSF69742">
    <property type="entry name" value="Glutamyl tRNA-reductase catalytic, N-terminal domain"/>
    <property type="match status" value="1"/>
</dbReference>
<dbReference type="SUPFAM" id="SSF69075">
    <property type="entry name" value="Glutamyl tRNA-reductase dimerization domain"/>
    <property type="match status" value="1"/>
</dbReference>
<dbReference type="SUPFAM" id="SSF51735">
    <property type="entry name" value="NAD(P)-binding Rossmann-fold domains"/>
    <property type="match status" value="1"/>
</dbReference>
<dbReference type="PROSITE" id="PS00747">
    <property type="entry name" value="GLUTR"/>
    <property type="match status" value="1"/>
</dbReference>
<protein>
    <recommendedName>
        <fullName evidence="1">Glutamyl-tRNA reductase</fullName>
        <shortName evidence="1">GluTR</shortName>
        <ecNumber evidence="1">1.2.1.70</ecNumber>
    </recommendedName>
</protein>
<accession>Q7V809</accession>
<reference key="1">
    <citation type="journal article" date="2003" name="Nature">
        <title>Genome divergence in two Prochlorococcus ecotypes reflects oceanic niche differentiation.</title>
        <authorList>
            <person name="Rocap G."/>
            <person name="Larimer F.W."/>
            <person name="Lamerdin J.E."/>
            <person name="Malfatti S."/>
            <person name="Chain P."/>
            <person name="Ahlgren N.A."/>
            <person name="Arellano A."/>
            <person name="Coleman M."/>
            <person name="Hauser L."/>
            <person name="Hess W.R."/>
            <person name="Johnson Z.I."/>
            <person name="Land M.L."/>
            <person name="Lindell D."/>
            <person name="Post A.F."/>
            <person name="Regala W."/>
            <person name="Shah M."/>
            <person name="Shaw S.L."/>
            <person name="Steglich C."/>
            <person name="Sullivan M.B."/>
            <person name="Ting C.S."/>
            <person name="Tolonen A."/>
            <person name="Webb E.A."/>
            <person name="Zinser E.R."/>
            <person name="Chisholm S.W."/>
        </authorList>
    </citation>
    <scope>NUCLEOTIDE SEQUENCE [LARGE SCALE GENOMIC DNA]</scope>
    <source>
        <strain>MIT 9313</strain>
    </source>
</reference>
<gene>
    <name evidence="1" type="primary">hemA</name>
    <name type="ordered locus">PMT_0567</name>
</gene>
<name>HEM1_PROMM</name>
<organism>
    <name type="scientific">Prochlorococcus marinus (strain MIT 9313)</name>
    <dbReference type="NCBI Taxonomy" id="74547"/>
    <lineage>
        <taxon>Bacteria</taxon>
        <taxon>Bacillati</taxon>
        <taxon>Cyanobacteriota</taxon>
        <taxon>Cyanophyceae</taxon>
        <taxon>Synechococcales</taxon>
        <taxon>Prochlorococcaceae</taxon>
        <taxon>Prochlorococcus</taxon>
    </lineage>
</organism>
<evidence type="ECO:0000255" key="1">
    <source>
        <dbReference type="HAMAP-Rule" id="MF_00087"/>
    </source>
</evidence>
<keyword id="KW-0149">Chlorophyll biosynthesis</keyword>
<keyword id="KW-0521">NADP</keyword>
<keyword id="KW-0560">Oxidoreductase</keyword>
<keyword id="KW-0627">Porphyrin biosynthesis</keyword>
<keyword id="KW-1185">Reference proteome</keyword>
<comment type="function">
    <text evidence="1">Catalyzes the NADPH-dependent reduction of glutamyl-tRNA(Glu) to glutamate 1-semialdehyde (GSA).</text>
</comment>
<comment type="catalytic activity">
    <reaction evidence="1">
        <text>(S)-4-amino-5-oxopentanoate + tRNA(Glu) + NADP(+) = L-glutamyl-tRNA(Glu) + NADPH + H(+)</text>
        <dbReference type="Rhea" id="RHEA:12344"/>
        <dbReference type="Rhea" id="RHEA-COMP:9663"/>
        <dbReference type="Rhea" id="RHEA-COMP:9680"/>
        <dbReference type="ChEBI" id="CHEBI:15378"/>
        <dbReference type="ChEBI" id="CHEBI:57501"/>
        <dbReference type="ChEBI" id="CHEBI:57783"/>
        <dbReference type="ChEBI" id="CHEBI:58349"/>
        <dbReference type="ChEBI" id="CHEBI:78442"/>
        <dbReference type="ChEBI" id="CHEBI:78520"/>
        <dbReference type="EC" id="1.2.1.70"/>
    </reaction>
</comment>
<comment type="pathway">
    <text evidence="1">Porphyrin-containing compound metabolism; protoporphyrin-IX biosynthesis; 5-aminolevulinate from L-glutamyl-tRNA(Glu): step 1/2.</text>
</comment>
<comment type="pathway">
    <text evidence="1">Porphyrin-containing compound metabolism; chlorophyll biosynthesis.</text>
</comment>
<comment type="subunit">
    <text evidence="1">Homodimer.</text>
</comment>
<comment type="domain">
    <text evidence="1">Possesses an unusual extended V-shaped dimeric structure with each monomer consisting of three distinct domains arranged along a curved 'spinal' alpha-helix. The N-terminal catalytic domain specifically recognizes the glutamate moiety of the substrate. The second domain is the NADPH-binding domain, and the third C-terminal domain is responsible for dimerization.</text>
</comment>
<comment type="miscellaneous">
    <text evidence="1">During catalysis, the active site Cys acts as a nucleophile attacking the alpha-carbonyl group of tRNA-bound glutamate with the formation of a thioester intermediate between enzyme and glutamate, and the concomitant release of tRNA(Glu). The thioester intermediate is finally reduced by direct hydride transfer from NADPH, to form the product GSA.</text>
</comment>
<comment type="similarity">
    <text evidence="1">Belongs to the glutamyl-tRNA reductase family.</text>
</comment>
<feature type="chain" id="PRO_0000114056" description="Glutamyl-tRNA reductase">
    <location>
        <begin position="1"/>
        <end position="436"/>
    </location>
</feature>
<feature type="active site" description="Nucleophile" evidence="1">
    <location>
        <position position="50"/>
    </location>
</feature>
<feature type="binding site" evidence="1">
    <location>
        <begin position="49"/>
        <end position="52"/>
    </location>
    <ligand>
        <name>substrate</name>
    </ligand>
</feature>
<feature type="binding site" evidence="1">
    <location>
        <position position="109"/>
    </location>
    <ligand>
        <name>substrate</name>
    </ligand>
</feature>
<feature type="binding site" evidence="1">
    <location>
        <begin position="114"/>
        <end position="116"/>
    </location>
    <ligand>
        <name>substrate</name>
    </ligand>
</feature>
<feature type="binding site" evidence="1">
    <location>
        <position position="120"/>
    </location>
    <ligand>
        <name>substrate</name>
    </ligand>
</feature>
<feature type="binding site" evidence="1">
    <location>
        <begin position="198"/>
        <end position="203"/>
    </location>
    <ligand>
        <name>NADP(+)</name>
        <dbReference type="ChEBI" id="CHEBI:58349"/>
    </ligand>
</feature>
<feature type="site" description="Important for activity" evidence="1">
    <location>
        <position position="99"/>
    </location>
</feature>
<proteinExistence type="inferred from homology"/>